<protein>
    <recommendedName>
        <fullName>U4/U6.U5 tri-snRNP-associated protein 3-like protein C162.01c</fullName>
    </recommendedName>
</protein>
<evidence type="ECO:0000250" key="1"/>
<evidence type="ECO:0000256" key="2">
    <source>
        <dbReference type="SAM" id="MobiDB-lite"/>
    </source>
</evidence>
<evidence type="ECO:0000269" key="3">
    <source>
    </source>
</evidence>
<evidence type="ECO:0000269" key="4">
    <source>
    </source>
</evidence>
<evidence type="ECO:0000305" key="5"/>
<reference key="1">
    <citation type="journal article" date="2002" name="Nature">
        <title>The genome sequence of Schizosaccharomyces pombe.</title>
        <authorList>
            <person name="Wood V."/>
            <person name="Gwilliam R."/>
            <person name="Rajandream M.A."/>
            <person name="Lyne M.H."/>
            <person name="Lyne R."/>
            <person name="Stewart A."/>
            <person name="Sgouros J.G."/>
            <person name="Peat N."/>
            <person name="Hayles J."/>
            <person name="Baker S.G."/>
            <person name="Basham D."/>
            <person name="Bowman S."/>
            <person name="Brooks K."/>
            <person name="Brown D."/>
            <person name="Brown S."/>
            <person name="Chillingworth T."/>
            <person name="Churcher C.M."/>
            <person name="Collins M."/>
            <person name="Connor R."/>
            <person name="Cronin A."/>
            <person name="Davis P."/>
            <person name="Feltwell T."/>
            <person name="Fraser A."/>
            <person name="Gentles S."/>
            <person name="Goble A."/>
            <person name="Hamlin N."/>
            <person name="Harris D.E."/>
            <person name="Hidalgo J."/>
            <person name="Hodgson G."/>
            <person name="Holroyd S."/>
            <person name="Hornsby T."/>
            <person name="Howarth S."/>
            <person name="Huckle E.J."/>
            <person name="Hunt S."/>
            <person name="Jagels K."/>
            <person name="James K.D."/>
            <person name="Jones L."/>
            <person name="Jones M."/>
            <person name="Leather S."/>
            <person name="McDonald S."/>
            <person name="McLean J."/>
            <person name="Mooney P."/>
            <person name="Moule S."/>
            <person name="Mungall K.L."/>
            <person name="Murphy L.D."/>
            <person name="Niblett D."/>
            <person name="Odell C."/>
            <person name="Oliver K."/>
            <person name="O'Neil S."/>
            <person name="Pearson D."/>
            <person name="Quail M.A."/>
            <person name="Rabbinowitsch E."/>
            <person name="Rutherford K.M."/>
            <person name="Rutter S."/>
            <person name="Saunders D."/>
            <person name="Seeger K."/>
            <person name="Sharp S."/>
            <person name="Skelton J."/>
            <person name="Simmonds M.N."/>
            <person name="Squares R."/>
            <person name="Squares S."/>
            <person name="Stevens K."/>
            <person name="Taylor K."/>
            <person name="Taylor R.G."/>
            <person name="Tivey A."/>
            <person name="Walsh S.V."/>
            <person name="Warren T."/>
            <person name="Whitehead S."/>
            <person name="Woodward J.R."/>
            <person name="Volckaert G."/>
            <person name="Aert R."/>
            <person name="Robben J."/>
            <person name="Grymonprez B."/>
            <person name="Weltjens I."/>
            <person name="Vanstreels E."/>
            <person name="Rieger M."/>
            <person name="Schaefer M."/>
            <person name="Mueller-Auer S."/>
            <person name="Gabel C."/>
            <person name="Fuchs M."/>
            <person name="Duesterhoeft A."/>
            <person name="Fritzc C."/>
            <person name="Holzer E."/>
            <person name="Moestl D."/>
            <person name="Hilbert H."/>
            <person name="Borzym K."/>
            <person name="Langer I."/>
            <person name="Beck A."/>
            <person name="Lehrach H."/>
            <person name="Reinhardt R."/>
            <person name="Pohl T.M."/>
            <person name="Eger P."/>
            <person name="Zimmermann W."/>
            <person name="Wedler H."/>
            <person name="Wambutt R."/>
            <person name="Purnelle B."/>
            <person name="Goffeau A."/>
            <person name="Cadieu E."/>
            <person name="Dreano S."/>
            <person name="Gloux S."/>
            <person name="Lelaure V."/>
            <person name="Mottier S."/>
            <person name="Galibert F."/>
            <person name="Aves S.J."/>
            <person name="Xiang Z."/>
            <person name="Hunt C."/>
            <person name="Moore K."/>
            <person name="Hurst S.M."/>
            <person name="Lucas M."/>
            <person name="Rochet M."/>
            <person name="Gaillardin C."/>
            <person name="Tallada V.A."/>
            <person name="Garzon A."/>
            <person name="Thode G."/>
            <person name="Daga R.R."/>
            <person name="Cruzado L."/>
            <person name="Jimenez J."/>
            <person name="Sanchez M."/>
            <person name="del Rey F."/>
            <person name="Benito J."/>
            <person name="Dominguez A."/>
            <person name="Revuelta J.L."/>
            <person name="Moreno S."/>
            <person name="Armstrong J."/>
            <person name="Forsburg S.L."/>
            <person name="Cerutti L."/>
            <person name="Lowe T."/>
            <person name="McCombie W.R."/>
            <person name="Paulsen I."/>
            <person name="Potashkin J."/>
            <person name="Shpakovski G.V."/>
            <person name="Ussery D."/>
            <person name="Barrell B.G."/>
            <person name="Nurse P."/>
        </authorList>
    </citation>
    <scope>NUCLEOTIDE SEQUENCE [LARGE SCALE GENOMIC DNA]</scope>
    <source>
        <strain>972 / ATCC 24843</strain>
    </source>
</reference>
<reference key="2">
    <citation type="journal article" date="2006" name="Nat. Biotechnol.">
        <title>ORFeome cloning and global analysis of protein localization in the fission yeast Schizosaccharomyces pombe.</title>
        <authorList>
            <person name="Matsuyama A."/>
            <person name="Arai R."/>
            <person name="Yashiroda Y."/>
            <person name="Shirai A."/>
            <person name="Kamata A."/>
            <person name="Sekido S."/>
            <person name="Kobayashi Y."/>
            <person name="Hashimoto A."/>
            <person name="Hamamoto M."/>
            <person name="Hiraoka Y."/>
            <person name="Horinouchi S."/>
            <person name="Yoshida M."/>
        </authorList>
    </citation>
    <scope>SUBCELLULAR LOCATION [LARGE SCALE ANALYSIS]</scope>
</reference>
<reference key="3">
    <citation type="journal article" date="2008" name="J. Proteome Res.">
        <title>Phosphoproteome analysis of fission yeast.</title>
        <authorList>
            <person name="Wilson-Grady J.T."/>
            <person name="Villen J."/>
            <person name="Gygi S.P."/>
        </authorList>
    </citation>
    <scope>PHOSPHORYLATION [LARGE SCALE ANALYSIS] AT SER-121 AND SER-140</scope>
    <scope>IDENTIFICATION BY MASS SPECTROMETRY</scope>
</reference>
<organism>
    <name type="scientific">Schizosaccharomyces pombe (strain 972 / ATCC 24843)</name>
    <name type="common">Fission yeast</name>
    <dbReference type="NCBI Taxonomy" id="284812"/>
    <lineage>
        <taxon>Eukaryota</taxon>
        <taxon>Fungi</taxon>
        <taxon>Dikarya</taxon>
        <taxon>Ascomycota</taxon>
        <taxon>Taphrinomycotina</taxon>
        <taxon>Schizosaccharomycetes</taxon>
        <taxon>Schizosaccharomycetales</taxon>
        <taxon>Schizosaccharomycetaceae</taxon>
        <taxon>Schizosaccharomyces</taxon>
    </lineage>
</organism>
<comment type="function">
    <text evidence="1">May play a role in mRNA splicing.</text>
</comment>
<comment type="subunit">
    <text evidence="1">Part of a tri-snRNP complex.</text>
</comment>
<comment type="subcellular location">
    <subcellularLocation>
        <location evidence="3">Nucleus</location>
    </subcellularLocation>
</comment>
<comment type="similarity">
    <text evidence="5">Belongs to the SNUT3 family.</text>
</comment>
<sequence>MSSSRSGEHRRNYAQGRNYESSRSRGDQRDRDYREYRRNYRDERSSRRYEDSQRRDYSPARRRDRYERHRESVREESPRRPVEHERNWQPELKHGRERFRERDYEGRRDRKERRDGVSPFSPEGEGLERKREHEKLQAPSPKEEEERPVDQGDKMDGVKEDKDGSLEVGKSHDAMTRTKSAEEEIVEQEDEATAEMKRIMGFSGFDTTTGKKHGDVGQVYKQKKTKYRQYMNRPGGFNRPLDNE</sequence>
<proteinExistence type="evidence at protein level"/>
<name>SNUT3_SCHPO</name>
<feature type="chain" id="PRO_0000374005" description="U4/U6.U5 tri-snRNP-associated protein 3-like protein C162.01c">
    <location>
        <begin position="1"/>
        <end position="244"/>
    </location>
</feature>
<feature type="region of interest" description="Disordered" evidence="2">
    <location>
        <begin position="1"/>
        <end position="192"/>
    </location>
</feature>
<feature type="region of interest" description="Disordered" evidence="2">
    <location>
        <begin position="223"/>
        <end position="244"/>
    </location>
</feature>
<feature type="compositionally biased region" description="Basic and acidic residues" evidence="2">
    <location>
        <begin position="1"/>
        <end position="11"/>
    </location>
</feature>
<feature type="compositionally biased region" description="Basic and acidic residues" evidence="2">
    <location>
        <begin position="20"/>
        <end position="116"/>
    </location>
</feature>
<feature type="compositionally biased region" description="Basic and acidic residues" evidence="2">
    <location>
        <begin position="126"/>
        <end position="182"/>
    </location>
</feature>
<feature type="compositionally biased region" description="Acidic residues" evidence="2">
    <location>
        <begin position="183"/>
        <end position="192"/>
    </location>
</feature>
<feature type="modified residue" description="Phosphoserine" evidence="4">
    <location>
        <position position="121"/>
    </location>
</feature>
<feature type="modified residue" description="Phosphoserine" evidence="4">
    <location>
        <position position="140"/>
    </location>
</feature>
<keyword id="KW-0507">mRNA processing</keyword>
<keyword id="KW-0508">mRNA splicing</keyword>
<keyword id="KW-0539">Nucleus</keyword>
<keyword id="KW-0597">Phosphoprotein</keyword>
<keyword id="KW-1185">Reference proteome</keyword>
<accession>O74418</accession>
<gene>
    <name type="ORF">SPCC162.01c</name>
</gene>
<dbReference type="EMBL" id="CU329672">
    <property type="protein sequence ID" value="CAA19581.1"/>
    <property type="molecule type" value="Genomic_DNA"/>
</dbReference>
<dbReference type="PIR" id="T41030">
    <property type="entry name" value="T41030"/>
</dbReference>
<dbReference type="BioGRID" id="275927">
    <property type="interactions" value="4"/>
</dbReference>
<dbReference type="FunCoup" id="O74418">
    <property type="interactions" value="88"/>
</dbReference>
<dbReference type="STRING" id="284812.O74418"/>
<dbReference type="iPTMnet" id="O74418"/>
<dbReference type="PaxDb" id="4896-SPCC162.01c.1"/>
<dbReference type="EnsemblFungi" id="SPCC162.01c.1">
    <property type="protein sequence ID" value="SPCC162.01c.1:pep"/>
    <property type="gene ID" value="SPCC162.01c"/>
</dbReference>
<dbReference type="KEGG" id="spo:2539361"/>
<dbReference type="PomBase" id="SPCC162.01c"/>
<dbReference type="VEuPathDB" id="FungiDB:SPCC162.01c"/>
<dbReference type="eggNOG" id="KOG3263">
    <property type="taxonomic scope" value="Eukaryota"/>
</dbReference>
<dbReference type="HOGENOM" id="CLU_1082427_0_0_1"/>
<dbReference type="InParanoid" id="O74418"/>
<dbReference type="OMA" id="VDSSTMW"/>
<dbReference type="PRO" id="PR:O74418"/>
<dbReference type="Proteomes" id="UP000002485">
    <property type="component" value="Chromosome III"/>
</dbReference>
<dbReference type="GO" id="GO:0005634">
    <property type="term" value="C:nucleus"/>
    <property type="evidence" value="ECO:0007005"/>
    <property type="project" value="PomBase"/>
</dbReference>
<dbReference type="GO" id="GO:0046540">
    <property type="term" value="C:U4/U6 x U5 tri-snRNP complex"/>
    <property type="evidence" value="ECO:0000250"/>
    <property type="project" value="PomBase"/>
</dbReference>
<dbReference type="GO" id="GO:0003723">
    <property type="term" value="F:RNA binding"/>
    <property type="evidence" value="ECO:0000303"/>
    <property type="project" value="PomBase"/>
</dbReference>
<dbReference type="GO" id="GO:0045292">
    <property type="term" value="P:mRNA cis splicing, via spliceosome"/>
    <property type="evidence" value="ECO:0000305"/>
    <property type="project" value="PomBase"/>
</dbReference>
<dbReference type="InterPro" id="IPR013957">
    <property type="entry name" value="SNRNP27"/>
</dbReference>
<dbReference type="PANTHER" id="PTHR31077">
    <property type="entry name" value="U4/U6.U5 SMALL NUCLEAR RIBONUCLEOPROTEIN 27 KDA PROTEIN"/>
    <property type="match status" value="1"/>
</dbReference>
<dbReference type="PANTHER" id="PTHR31077:SF1">
    <property type="entry name" value="U4_U6.U5 SMALL NUCLEAR RIBONUCLEOPROTEIN 27 KDA PROTEIN"/>
    <property type="match status" value="1"/>
</dbReference>
<dbReference type="Pfam" id="PF08648">
    <property type="entry name" value="SNRNP27"/>
    <property type="match status" value="1"/>
</dbReference>